<reference key="1">
    <citation type="journal article" date="2007" name="BMC Genomics">
        <title>The full-ORF clone resource of the German cDNA consortium.</title>
        <authorList>
            <person name="Bechtel S."/>
            <person name="Rosenfelder H."/>
            <person name="Duda A."/>
            <person name="Schmidt C.P."/>
            <person name="Ernst U."/>
            <person name="Wellenreuther R."/>
            <person name="Mehrle A."/>
            <person name="Schuster C."/>
            <person name="Bahr A."/>
            <person name="Bloecker H."/>
            <person name="Heubner D."/>
            <person name="Hoerlein A."/>
            <person name="Michel G."/>
            <person name="Wedler H."/>
            <person name="Koehrer K."/>
            <person name="Ottenwaelder B."/>
            <person name="Poustka A."/>
            <person name="Wiemann S."/>
            <person name="Schupp I."/>
        </authorList>
    </citation>
    <scope>NUCLEOTIDE SEQUENCE [LARGE SCALE MRNA] (ISOFORM 2)</scope>
    <source>
        <tissue>Retina</tissue>
    </source>
</reference>
<reference key="2">
    <citation type="journal article" date="2005" name="Nature">
        <title>Generation and annotation of the DNA sequences of human chromosomes 2 and 4.</title>
        <authorList>
            <person name="Hillier L.W."/>
            <person name="Graves T.A."/>
            <person name="Fulton R.S."/>
            <person name="Fulton L.A."/>
            <person name="Pepin K.H."/>
            <person name="Minx P."/>
            <person name="Wagner-McPherson C."/>
            <person name="Layman D."/>
            <person name="Wylie K."/>
            <person name="Sekhon M."/>
            <person name="Becker M.C."/>
            <person name="Fewell G.A."/>
            <person name="Delehaunty K.D."/>
            <person name="Miner T.L."/>
            <person name="Nash W.E."/>
            <person name="Kremitzki C."/>
            <person name="Oddy L."/>
            <person name="Du H."/>
            <person name="Sun H."/>
            <person name="Bradshaw-Cordum H."/>
            <person name="Ali J."/>
            <person name="Carter J."/>
            <person name="Cordes M."/>
            <person name="Harris A."/>
            <person name="Isak A."/>
            <person name="van Brunt A."/>
            <person name="Nguyen C."/>
            <person name="Du F."/>
            <person name="Courtney L."/>
            <person name="Kalicki J."/>
            <person name="Ozersky P."/>
            <person name="Abbott S."/>
            <person name="Armstrong J."/>
            <person name="Belter E.A."/>
            <person name="Caruso L."/>
            <person name="Cedroni M."/>
            <person name="Cotton M."/>
            <person name="Davidson T."/>
            <person name="Desai A."/>
            <person name="Elliott G."/>
            <person name="Erb T."/>
            <person name="Fronick C."/>
            <person name="Gaige T."/>
            <person name="Haakenson W."/>
            <person name="Haglund K."/>
            <person name="Holmes A."/>
            <person name="Harkins R."/>
            <person name="Kim K."/>
            <person name="Kruchowski S.S."/>
            <person name="Strong C.M."/>
            <person name="Grewal N."/>
            <person name="Goyea E."/>
            <person name="Hou S."/>
            <person name="Levy A."/>
            <person name="Martinka S."/>
            <person name="Mead K."/>
            <person name="McLellan M.D."/>
            <person name="Meyer R."/>
            <person name="Randall-Maher J."/>
            <person name="Tomlinson C."/>
            <person name="Dauphin-Kohlberg S."/>
            <person name="Kozlowicz-Reilly A."/>
            <person name="Shah N."/>
            <person name="Swearengen-Shahid S."/>
            <person name="Snider J."/>
            <person name="Strong J.T."/>
            <person name="Thompson J."/>
            <person name="Yoakum M."/>
            <person name="Leonard S."/>
            <person name="Pearman C."/>
            <person name="Trani L."/>
            <person name="Radionenko M."/>
            <person name="Waligorski J.E."/>
            <person name="Wang C."/>
            <person name="Rock S.M."/>
            <person name="Tin-Wollam A.-M."/>
            <person name="Maupin R."/>
            <person name="Latreille P."/>
            <person name="Wendl M.C."/>
            <person name="Yang S.-P."/>
            <person name="Pohl C."/>
            <person name="Wallis J.W."/>
            <person name="Spieth J."/>
            <person name="Bieri T.A."/>
            <person name="Berkowicz N."/>
            <person name="Nelson J.O."/>
            <person name="Osborne J."/>
            <person name="Ding L."/>
            <person name="Meyer R."/>
            <person name="Sabo A."/>
            <person name="Shotland Y."/>
            <person name="Sinha P."/>
            <person name="Wohldmann P.E."/>
            <person name="Cook L.L."/>
            <person name="Hickenbotham M.T."/>
            <person name="Eldred J."/>
            <person name="Williams D."/>
            <person name="Jones T.A."/>
            <person name="She X."/>
            <person name="Ciccarelli F.D."/>
            <person name="Izaurralde E."/>
            <person name="Taylor J."/>
            <person name="Schmutz J."/>
            <person name="Myers R.M."/>
            <person name="Cox D.R."/>
            <person name="Huang X."/>
            <person name="McPherson J.D."/>
            <person name="Mardis E.R."/>
            <person name="Clifton S.W."/>
            <person name="Warren W.C."/>
            <person name="Chinwalla A.T."/>
            <person name="Eddy S.R."/>
            <person name="Marra M.A."/>
            <person name="Ovcharenko I."/>
            <person name="Furey T.S."/>
            <person name="Miller W."/>
            <person name="Eichler E.E."/>
            <person name="Bork P."/>
            <person name="Suyama M."/>
            <person name="Torrents D."/>
            <person name="Waterston R.H."/>
            <person name="Wilson R.K."/>
        </authorList>
    </citation>
    <scope>NUCLEOTIDE SEQUENCE [LARGE SCALE GENOMIC DNA]</scope>
</reference>
<reference key="3">
    <citation type="journal article" date="2005" name="Genome Res.">
        <title>Complex genomic rearrangements lead to novel primate gene function.</title>
        <authorList>
            <person name="Ciccarelli F.D."/>
            <person name="von Mering C."/>
            <person name="Suyama M."/>
            <person name="Harrington E.D."/>
            <person name="Izaurralde E."/>
            <person name="Bork P."/>
        </authorList>
    </citation>
    <scope>RANBP2 CLUSTER</scope>
</reference>
<comment type="alternative products">
    <event type="alternative splicing"/>
    <isoform>
        <id>Q7Z3J3-1</id>
        <name>1</name>
        <sequence type="displayed"/>
    </isoform>
    <isoform>
        <id>Q7Z3J3-2</id>
        <name>2</name>
        <sequence type="described" ref="VSP_030214 VSP_030215"/>
    </isoform>
</comment>
<comment type="miscellaneous">
    <text>One of the 8 copies of RANBP2 clustered close to the chromosome 2 centromere.</text>
</comment>
<name>RGPD4_HUMAN</name>
<proteinExistence type="evidence at protein level"/>
<gene>
    <name type="primary">RGPD4</name>
    <name type="synonym">RGP4</name>
</gene>
<organism>
    <name type="scientific">Homo sapiens</name>
    <name type="common">Human</name>
    <dbReference type="NCBI Taxonomy" id="9606"/>
    <lineage>
        <taxon>Eukaryota</taxon>
        <taxon>Metazoa</taxon>
        <taxon>Chordata</taxon>
        <taxon>Craniata</taxon>
        <taxon>Vertebrata</taxon>
        <taxon>Euteleostomi</taxon>
        <taxon>Mammalia</taxon>
        <taxon>Eutheria</taxon>
        <taxon>Euarchontoglires</taxon>
        <taxon>Primates</taxon>
        <taxon>Haplorrhini</taxon>
        <taxon>Catarrhini</taxon>
        <taxon>Hominidae</taxon>
        <taxon>Homo</taxon>
    </lineage>
</organism>
<protein>
    <recommendedName>
        <fullName>RanBP2-like and GRIP domain-containing protein 4</fullName>
    </recommendedName>
</protein>
<sequence>MSCSKAYGERYVASVQGSAPSPRKKSTRGFYFAKLYYEAKEYDLAKKYICTYINVREMDPRAHRFLGLLYELEENTEKAVECYRRSVELNPTQKDLVLKIAELLCKNDVTDGRAKYWVERAAKLFPGSPAIYKLKEQLLDCEGEDGWNKLFDLIQSELYVRPDDVHVNIRLVELYRSTKRLKDAVARCHEAERNIALRSSLEWNSCVVQTLKEYLESLQCLESDKSDWRATNTDLLLAYANLMLLTLSTRDVQESRELLESFDSALQSAKSSLGGNDELSATFLEMKGHFYMHAGSLLLKMGQHGNNVQWRALSELAALCYLIAFQVPRPKIKLIKGEAGQNLLEMMACDRLSQSGHMLLNLSRGKQDFLKVVVETFANKSGQSALYDALFSSQSPKDTSFLGSDDIGNIDVQEPELEDLARYDVGAIRAHNGSLQHLTWLGLQWNSLPALPGIRKWLKQLFHHLPQETSRLETNAPESICILDLEVFLLGVVYTSHLQLKEKCNSHHSSYQPLCLPLPVCKQLCTERQKSWWDAVCTLIHRKAVPGNSAKLRLLVQHEINTLRAQEKHGLQPALLVHWAKCLQKMGSGLNSFYDQREYIGRSVHYWKKVLPLLKIIKKKNSIPEPIDPLFKHFHSVDIQASEIVEYEEDAHVTFAILDAVNGNIEDAMTAFESIKSVVSYWNLALIFHRKAEDIANDALSPEEQEECKNYLRKTRGYLIKILDDSDSNLSVVKKLPVPLESVKEMLKSVMQELENYSEGDPLYKNGSLRNADSEIKHSTPSPTKYSLSPSKSYKYSPKTPPRWAEDQNSLLKMIRQEVKAIKEEMQELKLNSSKSASHHRWPTENYGPDSVPDGYQGSQTFHGAPLTVATTGPSVYYSQSPAYNSQYLLRPAANVTPTKGSSNTEFKSTKEGFSIPVSADGFKFGISEPGNQEKESEKPLENDTGFQAQDISGQKNGRGVIFGQTSSTFTFADVAKSTSGEGFQFGKKDPNFKGFSGAGEKLFSSQCGKMANKANTSGDFEKDDDAYKTEDSDDIHFEPVVQMPEKVELVIGEEGEKVLYSQGVKLFRFDAEVRQWKERGLGNLKILKNEVNGKPRMLMRREQVLKVCANHWITTTMNLKPLSGSDRAWMWSASDFSDGDAKLERLAAKFKTPELAEEFKQKFEECQQLLLDIPLQTPHKLVDTGRAAKLIQRAEEMKSGLKDFKTFLTNDQTKVTEEENKGSGTGAAGASDTTIKPNPENTGPTLEWDNCDLREDALDDSVSSSSVHASPLASSPVRKNLFHFGESTTGSNFSFKSALSPSKSPAKLNQSGTSVGTDEESDVTQEEERDGQYFEPVVPLPDLVEVSSGEENEKVVFSHRAELYRYDKDVGQWKERGIGDIKILQNYDNKQVRIVMRRDQVLKLCANHTITPDMSLQNMKGTERVWVWTACDFADGERKVEHLAVRFKLQDVADSFKKIFDEAKTAQEKDSLITPHVSRSSTPRESPCGKIAVAVLEETTRERTDVIQGDDVADAASEVEVSSTSETTTKAVVSPPKFVFGSESVKRIFSSEKSKPFAFGNSSATGSLFGFSFNASLKSNNSETSSVAQSGSESKVEPKKCELSKNSDIEQSSDSKVKNLSASFPMEESSINYTFKTPEKEPPLWHAEFTKEELVQKLSSTTKSADHLNGLLREAEATSAVLMEQIKLLKSEIRRLERNQEQEESAANVEHLKNVLLQFIFLKPGSERERLLPVINTMLQLSPEEKGKLAAVAQGEE</sequence>
<evidence type="ECO:0000250" key="1">
    <source>
        <dbReference type="UniProtKB" id="Q99666"/>
    </source>
</evidence>
<evidence type="ECO:0000255" key="2">
    <source>
        <dbReference type="PROSITE-ProRule" id="PRU00164"/>
    </source>
</evidence>
<evidence type="ECO:0000255" key="3">
    <source>
        <dbReference type="PROSITE-ProRule" id="PRU00250"/>
    </source>
</evidence>
<evidence type="ECO:0000256" key="4">
    <source>
        <dbReference type="SAM" id="MobiDB-lite"/>
    </source>
</evidence>
<evidence type="ECO:0000303" key="5">
    <source>
    </source>
</evidence>
<accession>Q7Z3J3</accession>
<accession>B9A029</accession>
<feature type="chain" id="PRO_0000314141" description="RanBP2-like and GRIP domain-containing protein 4">
    <location>
        <begin position="1"/>
        <end position="1758"/>
    </location>
</feature>
<feature type="repeat" description="TPR 1">
    <location>
        <begin position="60"/>
        <end position="93"/>
    </location>
</feature>
<feature type="repeat" description="TPR 2">
    <location>
        <begin position="584"/>
        <end position="617"/>
    </location>
</feature>
<feature type="domain" description="RanBD1 1" evidence="2">
    <location>
        <begin position="1037"/>
        <end position="1173"/>
    </location>
</feature>
<feature type="domain" description="RanBD1 2" evidence="2">
    <location>
        <begin position="1334"/>
        <end position="1470"/>
    </location>
</feature>
<feature type="domain" description="GRIP" evidence="3">
    <location>
        <begin position="1703"/>
        <end position="1753"/>
    </location>
</feature>
<feature type="region of interest" description="Disordered" evidence="4">
    <location>
        <begin position="761"/>
        <end position="805"/>
    </location>
</feature>
<feature type="region of interest" description="Disordered" evidence="4">
    <location>
        <begin position="1213"/>
        <end position="1249"/>
    </location>
</feature>
<feature type="region of interest" description="Disordered" evidence="4">
    <location>
        <begin position="1295"/>
        <end position="1332"/>
    </location>
</feature>
<feature type="region of interest" description="Disordered" evidence="4">
    <location>
        <begin position="1583"/>
        <end position="1621"/>
    </location>
</feature>
<feature type="compositionally biased region" description="Low complexity" evidence="4">
    <location>
        <begin position="779"/>
        <end position="798"/>
    </location>
</feature>
<feature type="compositionally biased region" description="Polar residues" evidence="4">
    <location>
        <begin position="1236"/>
        <end position="1245"/>
    </location>
</feature>
<feature type="compositionally biased region" description="Low complexity" evidence="4">
    <location>
        <begin position="1295"/>
        <end position="1309"/>
    </location>
</feature>
<feature type="compositionally biased region" description="Acidic residues" evidence="4">
    <location>
        <begin position="1318"/>
        <end position="1330"/>
    </location>
</feature>
<feature type="compositionally biased region" description="Polar residues" evidence="4">
    <location>
        <begin position="1583"/>
        <end position="1594"/>
    </location>
</feature>
<feature type="compositionally biased region" description="Basic and acidic residues" evidence="4">
    <location>
        <begin position="1595"/>
        <end position="1618"/>
    </location>
</feature>
<feature type="modified residue" description="Phosphoserine" evidence="1">
    <location>
        <position position="21"/>
    </location>
</feature>
<feature type="splice variant" id="VSP_030214" description="In isoform 2." evidence="5">
    <location>
        <begin position="1"/>
        <end position="57"/>
    </location>
</feature>
<feature type="splice variant" id="VSP_030215" description="In isoform 2." evidence="5">
    <location>
        <begin position="213"/>
        <end position="1758"/>
    </location>
</feature>
<keyword id="KW-0025">Alternative splicing</keyword>
<keyword id="KW-0597">Phosphoprotein</keyword>
<keyword id="KW-1267">Proteomics identification</keyword>
<keyword id="KW-1185">Reference proteome</keyword>
<keyword id="KW-0677">Repeat</keyword>
<keyword id="KW-0802">TPR repeat</keyword>
<dbReference type="EMBL" id="BX537861">
    <property type="protein sequence ID" value="CAD97866.1"/>
    <property type="molecule type" value="mRNA"/>
</dbReference>
<dbReference type="EMBL" id="AC009963">
    <property type="status" value="NOT_ANNOTATED_CDS"/>
    <property type="molecule type" value="Genomic_DNA"/>
</dbReference>
<dbReference type="EMBL" id="AC096655">
    <property type="status" value="NOT_ANNOTATED_CDS"/>
    <property type="molecule type" value="Genomic_DNA"/>
</dbReference>
<dbReference type="CCDS" id="CCDS46381.1">
    <molecule id="Q7Z3J3-1"/>
</dbReference>
<dbReference type="RefSeq" id="NP_872394.2">
    <molecule id="Q7Z3J3-1"/>
    <property type="nucleotide sequence ID" value="NM_182588.2"/>
</dbReference>
<dbReference type="SMR" id="Q7Z3J3"/>
<dbReference type="BioGRID" id="130039">
    <property type="interactions" value="22"/>
</dbReference>
<dbReference type="FunCoup" id="Q7Z3J3">
    <property type="interactions" value="178"/>
</dbReference>
<dbReference type="IntAct" id="Q7Z3J3">
    <property type="interactions" value="7"/>
</dbReference>
<dbReference type="STRING" id="9606.ENSP00000386810"/>
<dbReference type="GlyConnect" id="2898">
    <property type="glycosylation" value="1 O-GlcNAc glycan (1 site)"/>
</dbReference>
<dbReference type="GlyCosmos" id="Q7Z3J3">
    <property type="glycosylation" value="1 site, 1 glycan"/>
</dbReference>
<dbReference type="GlyGen" id="Q7Z3J3">
    <property type="glycosylation" value="4 sites, 1 O-linked glycan (4 sites)"/>
</dbReference>
<dbReference type="iPTMnet" id="Q7Z3J3"/>
<dbReference type="PhosphoSitePlus" id="Q7Z3J3"/>
<dbReference type="SwissPalm" id="Q7Z3J3"/>
<dbReference type="BioMuta" id="RGPD4"/>
<dbReference type="DMDM" id="325511381"/>
<dbReference type="jPOST" id="Q7Z3J3"/>
<dbReference type="MassIVE" id="Q7Z3J3"/>
<dbReference type="PaxDb" id="9606-ENSP00000386810"/>
<dbReference type="PeptideAtlas" id="Q7Z3J3"/>
<dbReference type="ProteomicsDB" id="69057">
    <molecule id="Q7Z3J3-1"/>
</dbReference>
<dbReference type="Pumba" id="Q7Z3J3"/>
<dbReference type="DNASU" id="285190"/>
<dbReference type="Ensembl" id="ENST00000408999.4">
    <molecule id="Q7Z3J3-1"/>
    <property type="protein sequence ID" value="ENSP00000386810.4"/>
    <property type="gene ID" value="ENSG00000196862.10"/>
</dbReference>
<dbReference type="GeneID" id="285190"/>
<dbReference type="KEGG" id="hsa:285190"/>
<dbReference type="MANE-Select" id="ENST00000408999.4">
    <property type="protein sequence ID" value="ENSP00000386810.4"/>
    <property type="RefSeq nucleotide sequence ID" value="NM_182588.3"/>
    <property type="RefSeq protein sequence ID" value="NP_872394.2"/>
</dbReference>
<dbReference type="UCSC" id="uc010ywk.3">
    <molecule id="Q7Z3J3-1"/>
    <property type="organism name" value="human"/>
</dbReference>
<dbReference type="AGR" id="HGNC:32417"/>
<dbReference type="CTD" id="285190"/>
<dbReference type="GeneCards" id="RGPD4"/>
<dbReference type="HGNC" id="HGNC:32417">
    <property type="gene designation" value="RGPD4"/>
</dbReference>
<dbReference type="HPA" id="ENSG00000196862">
    <property type="expression patterns" value="Tissue enhanced (testis)"/>
</dbReference>
<dbReference type="MIM" id="612707">
    <property type="type" value="gene"/>
</dbReference>
<dbReference type="neXtProt" id="NX_Q7Z3J3"/>
<dbReference type="OpenTargets" id="ENSG00000196862"/>
<dbReference type="PharmGKB" id="PA142671073"/>
<dbReference type="VEuPathDB" id="HostDB:ENSG00000196862"/>
<dbReference type="eggNOG" id="KOG0864">
    <property type="taxonomic scope" value="Eukaryota"/>
</dbReference>
<dbReference type="GeneTree" id="ENSGT00940000164065"/>
<dbReference type="HOGENOM" id="CLU_004100_0_0_1"/>
<dbReference type="InParanoid" id="Q7Z3J3"/>
<dbReference type="OMA" id="REETHED"/>
<dbReference type="OrthoDB" id="9523654at2759"/>
<dbReference type="PAN-GO" id="Q7Z3J3">
    <property type="GO annotations" value="4 GO annotations based on evolutionary models"/>
</dbReference>
<dbReference type="PhylomeDB" id="Q7Z3J3"/>
<dbReference type="TreeFam" id="TF314797"/>
<dbReference type="PathwayCommons" id="Q7Z3J3"/>
<dbReference type="SignaLink" id="Q7Z3J3"/>
<dbReference type="BioGRID-ORCS" id="285190">
    <property type="hits" value="38 hits in 1044 CRISPR screens"/>
</dbReference>
<dbReference type="GenomeRNAi" id="285190"/>
<dbReference type="Pharos" id="Q7Z3J3">
    <property type="development level" value="Tdark"/>
</dbReference>
<dbReference type="PRO" id="PR:Q7Z3J3"/>
<dbReference type="Proteomes" id="UP000005640">
    <property type="component" value="Chromosome 2"/>
</dbReference>
<dbReference type="RNAct" id="Q7Z3J3">
    <property type="molecule type" value="protein"/>
</dbReference>
<dbReference type="Bgee" id="ENSG00000196862">
    <property type="expression patterns" value="Expressed in male germ line stem cell (sensu Vertebrata) in testis and 85 other cell types or tissues"/>
</dbReference>
<dbReference type="GO" id="GO:0005737">
    <property type="term" value="C:cytoplasm"/>
    <property type="evidence" value="ECO:0000318"/>
    <property type="project" value="GO_Central"/>
</dbReference>
<dbReference type="GO" id="GO:0005643">
    <property type="term" value="C:nuclear pore"/>
    <property type="evidence" value="ECO:0000318"/>
    <property type="project" value="GO_Central"/>
</dbReference>
<dbReference type="GO" id="GO:0006607">
    <property type="term" value="P:NLS-bearing protein import into nucleus"/>
    <property type="evidence" value="ECO:0000318"/>
    <property type="project" value="GO_Central"/>
</dbReference>
<dbReference type="CDD" id="cd13177">
    <property type="entry name" value="RanBD2_RanBP2-like"/>
    <property type="match status" value="1"/>
</dbReference>
<dbReference type="CDD" id="cd14685">
    <property type="entry name" value="RanBD3_RanBP2-like"/>
    <property type="match status" value="1"/>
</dbReference>
<dbReference type="FunFam" id="2.30.29.30:FF:000018">
    <property type="entry name" value="E3 SUMO-protein ligase RanBP2"/>
    <property type="match status" value="2"/>
</dbReference>
<dbReference type="FunFam" id="1.25.40.10:FF:000114">
    <property type="entry name" value="E3 SUMO-protein ligase RanBP2 isoform X1"/>
    <property type="match status" value="1"/>
</dbReference>
<dbReference type="Gene3D" id="2.30.29.30">
    <property type="entry name" value="Pleckstrin-homology domain (PH domain)/Phosphotyrosine-binding domain (PTB)"/>
    <property type="match status" value="2"/>
</dbReference>
<dbReference type="Gene3D" id="1.25.40.10">
    <property type="entry name" value="Tetratricopeptide repeat domain"/>
    <property type="match status" value="1"/>
</dbReference>
<dbReference type="InterPro" id="IPR032023">
    <property type="entry name" value="GCC2_Rab_bind"/>
</dbReference>
<dbReference type="InterPro" id="IPR000237">
    <property type="entry name" value="GRIP_dom"/>
</dbReference>
<dbReference type="InterPro" id="IPR011993">
    <property type="entry name" value="PH-like_dom_sf"/>
</dbReference>
<dbReference type="InterPro" id="IPR000156">
    <property type="entry name" value="Ran_bind_dom"/>
</dbReference>
<dbReference type="InterPro" id="IPR045255">
    <property type="entry name" value="RanBP1-like"/>
</dbReference>
<dbReference type="InterPro" id="IPR011990">
    <property type="entry name" value="TPR-like_helical_dom_sf"/>
</dbReference>
<dbReference type="InterPro" id="IPR019734">
    <property type="entry name" value="TPR_rpt"/>
</dbReference>
<dbReference type="PANTHER" id="PTHR23138:SF175">
    <property type="entry name" value="E3 SUMO-PROTEIN LIGASE RANBP2-RELATED"/>
    <property type="match status" value="1"/>
</dbReference>
<dbReference type="PANTHER" id="PTHR23138">
    <property type="entry name" value="RAN BINDING PROTEIN"/>
    <property type="match status" value="1"/>
</dbReference>
<dbReference type="Pfam" id="PF01465">
    <property type="entry name" value="GRIP"/>
    <property type="match status" value="1"/>
</dbReference>
<dbReference type="Pfam" id="PF16704">
    <property type="entry name" value="Rab_bind"/>
    <property type="match status" value="1"/>
</dbReference>
<dbReference type="Pfam" id="PF00638">
    <property type="entry name" value="Ran_BP1"/>
    <property type="match status" value="2"/>
</dbReference>
<dbReference type="Pfam" id="PF13181">
    <property type="entry name" value="TPR_8"/>
    <property type="match status" value="1"/>
</dbReference>
<dbReference type="SMART" id="SM00755">
    <property type="entry name" value="Grip"/>
    <property type="match status" value="1"/>
</dbReference>
<dbReference type="SMART" id="SM00160">
    <property type="entry name" value="RanBD"/>
    <property type="match status" value="2"/>
</dbReference>
<dbReference type="SMART" id="SM00028">
    <property type="entry name" value="TPR"/>
    <property type="match status" value="1"/>
</dbReference>
<dbReference type="SUPFAM" id="SSF50729">
    <property type="entry name" value="PH domain-like"/>
    <property type="match status" value="2"/>
</dbReference>
<dbReference type="SUPFAM" id="SSF48452">
    <property type="entry name" value="TPR-like"/>
    <property type="match status" value="1"/>
</dbReference>
<dbReference type="PROSITE" id="PS50913">
    <property type="entry name" value="GRIP"/>
    <property type="match status" value="1"/>
</dbReference>
<dbReference type="PROSITE" id="PS50196">
    <property type="entry name" value="RANBD1"/>
    <property type="match status" value="2"/>
</dbReference>
<dbReference type="PROSITE" id="PS50005">
    <property type="entry name" value="TPR"/>
    <property type="match status" value="1"/>
</dbReference>
<dbReference type="PROSITE" id="PS50293">
    <property type="entry name" value="TPR_REGION"/>
    <property type="match status" value="1"/>
</dbReference>